<reference key="1">
    <citation type="submission" date="2008-02" db="EMBL/GenBank/DDBJ databases">
        <title>Complete sequence of Escherichia coli C str. ATCC 8739.</title>
        <authorList>
            <person name="Copeland A."/>
            <person name="Lucas S."/>
            <person name="Lapidus A."/>
            <person name="Glavina del Rio T."/>
            <person name="Dalin E."/>
            <person name="Tice H."/>
            <person name="Bruce D."/>
            <person name="Goodwin L."/>
            <person name="Pitluck S."/>
            <person name="Kiss H."/>
            <person name="Brettin T."/>
            <person name="Detter J.C."/>
            <person name="Han C."/>
            <person name="Kuske C.R."/>
            <person name="Schmutz J."/>
            <person name="Larimer F."/>
            <person name="Land M."/>
            <person name="Hauser L."/>
            <person name="Kyrpides N."/>
            <person name="Mikhailova N."/>
            <person name="Ingram L."/>
            <person name="Richardson P."/>
        </authorList>
    </citation>
    <scope>NUCLEOTIDE SEQUENCE [LARGE SCALE GENOMIC DNA]</scope>
    <source>
        <strain>ATCC 8739 / DSM 1576 / NBRC 3972 / NCIMB 8545 / WDCM 00012 / Crooks</strain>
    </source>
</reference>
<comment type="function">
    <text evidence="1">Formaldehyde sensor. In the absence of formaldehyde, mediates repression of the frmRAB operon. Acts by binding directly to the frmRAB promoter region. In the presence of formaldehyde, it dissociates from the frmRAB promoter region and allows expression of the formaldehyde detoxification system encoded by frmA and frmB.</text>
</comment>
<comment type="subunit">
    <text evidence="1">Homotetramer.</text>
</comment>
<comment type="subcellular location">
    <subcellularLocation>
        <location evidence="1">Cytoplasm</location>
    </subcellularLocation>
</comment>
<comment type="similarity">
    <text evidence="2">Belongs to the FrmR/RcnR family.</text>
</comment>
<name>FRMR_ECOLC</name>
<accession>B1J084</accession>
<proteinExistence type="inferred from homology"/>
<gene>
    <name evidence="1" type="primary">frmR</name>
    <name type="ordered locus">EcolC_3268</name>
</gene>
<protein>
    <recommendedName>
        <fullName evidence="1">Transcriptional repressor FrmR</fullName>
    </recommendedName>
</protein>
<sequence length="91" mass="10318">MPSTPEEKKKVLTRVRRIRGQIDALERSLEGDAECRAILQQIAAVRGAANGLMAEVLESHIRETFDRNDCYSREVSQSVDDTIELVRAYLK</sequence>
<keyword id="KW-0963">Cytoplasm</keyword>
<keyword id="KW-0238">DNA-binding</keyword>
<keyword id="KW-0678">Repressor</keyword>
<keyword id="KW-0804">Transcription</keyword>
<keyword id="KW-0805">Transcription regulation</keyword>
<dbReference type="EMBL" id="CP000946">
    <property type="protein sequence ID" value="ACA78890.1"/>
    <property type="molecule type" value="Genomic_DNA"/>
</dbReference>
<dbReference type="RefSeq" id="WP_001141271.1">
    <property type="nucleotide sequence ID" value="NZ_MTFT01000010.1"/>
</dbReference>
<dbReference type="SMR" id="B1J084"/>
<dbReference type="GeneID" id="93777098"/>
<dbReference type="KEGG" id="ecl:EcolC_3268"/>
<dbReference type="HOGENOM" id="CLU_130332_3_0_6"/>
<dbReference type="GO" id="GO:0005737">
    <property type="term" value="C:cytoplasm"/>
    <property type="evidence" value="ECO:0007669"/>
    <property type="project" value="UniProtKB-SubCell"/>
</dbReference>
<dbReference type="GO" id="GO:0003677">
    <property type="term" value="F:DNA binding"/>
    <property type="evidence" value="ECO:0007669"/>
    <property type="project" value="UniProtKB-KW"/>
</dbReference>
<dbReference type="GO" id="GO:0046872">
    <property type="term" value="F:metal ion binding"/>
    <property type="evidence" value="ECO:0007669"/>
    <property type="project" value="InterPro"/>
</dbReference>
<dbReference type="GO" id="GO:0045892">
    <property type="term" value="P:negative regulation of DNA-templated transcription"/>
    <property type="evidence" value="ECO:0007669"/>
    <property type="project" value="UniProtKB-ARBA"/>
</dbReference>
<dbReference type="CDD" id="cd10153">
    <property type="entry name" value="RcnR-FrmR-like_DUF156"/>
    <property type="match status" value="1"/>
</dbReference>
<dbReference type="FunFam" id="1.20.58.1000:FF:000002">
    <property type="entry name" value="Transcriptional repressor FrmR"/>
    <property type="match status" value="1"/>
</dbReference>
<dbReference type="Gene3D" id="1.20.58.1000">
    <property type="entry name" value="Metal-sensitive repressor, helix protomer"/>
    <property type="match status" value="1"/>
</dbReference>
<dbReference type="InterPro" id="IPR003735">
    <property type="entry name" value="Metal_Tscrpt_repr"/>
</dbReference>
<dbReference type="InterPro" id="IPR038390">
    <property type="entry name" value="Metal_Tscrpt_repr_sf"/>
</dbReference>
<dbReference type="NCBIfam" id="NF008464">
    <property type="entry name" value="PRK11352.1"/>
    <property type="match status" value="1"/>
</dbReference>
<dbReference type="PANTHER" id="PTHR33677:SF5">
    <property type="entry name" value="TRANSCRIPTIONAL REPRESSOR FRMR"/>
    <property type="match status" value="1"/>
</dbReference>
<dbReference type="PANTHER" id="PTHR33677">
    <property type="entry name" value="TRANSCRIPTIONAL REPRESSOR FRMR-RELATED"/>
    <property type="match status" value="1"/>
</dbReference>
<dbReference type="Pfam" id="PF02583">
    <property type="entry name" value="Trns_repr_metal"/>
    <property type="match status" value="1"/>
</dbReference>
<evidence type="ECO:0000250" key="1">
    <source>
        <dbReference type="UniProtKB" id="P0AAP3"/>
    </source>
</evidence>
<evidence type="ECO:0000305" key="2"/>
<organism>
    <name type="scientific">Escherichia coli (strain ATCC 8739 / DSM 1576 / NBRC 3972 / NCIMB 8545 / WDCM 00012 / Crooks)</name>
    <dbReference type="NCBI Taxonomy" id="481805"/>
    <lineage>
        <taxon>Bacteria</taxon>
        <taxon>Pseudomonadati</taxon>
        <taxon>Pseudomonadota</taxon>
        <taxon>Gammaproteobacteria</taxon>
        <taxon>Enterobacterales</taxon>
        <taxon>Enterobacteriaceae</taxon>
        <taxon>Escherichia</taxon>
    </lineage>
</organism>
<feature type="chain" id="PRO_0000340120" description="Transcriptional repressor FrmR">
    <location>
        <begin position="1"/>
        <end position="91"/>
    </location>
</feature>
<feature type="site" description="Important for response to formaldehyde" evidence="1">
    <location>
        <position position="2"/>
    </location>
</feature>
<feature type="site" description="Important for response to formaldehyde" evidence="1">
    <location>
        <position position="35"/>
    </location>
</feature>